<gene>
    <name evidence="1" type="primary">purH</name>
    <name type="ordered locus">XOO0539</name>
</gene>
<dbReference type="EC" id="2.1.2.3" evidence="1"/>
<dbReference type="EC" id="3.5.4.10" evidence="1"/>
<dbReference type="EMBL" id="AE013598">
    <property type="protein sequence ID" value="AAW73793.1"/>
    <property type="molecule type" value="Genomic_DNA"/>
</dbReference>
<dbReference type="SMR" id="Q5H5H7"/>
<dbReference type="STRING" id="291331.XOO0539"/>
<dbReference type="KEGG" id="xoo:XOO0539"/>
<dbReference type="PATRIC" id="fig|291331.8.peg.604"/>
<dbReference type="HOGENOM" id="CLU_016316_5_2_6"/>
<dbReference type="UniPathway" id="UPA00074">
    <property type="reaction ID" value="UER00133"/>
</dbReference>
<dbReference type="UniPathway" id="UPA00074">
    <property type="reaction ID" value="UER00135"/>
</dbReference>
<dbReference type="Proteomes" id="UP000006735">
    <property type="component" value="Chromosome"/>
</dbReference>
<dbReference type="GO" id="GO:0005829">
    <property type="term" value="C:cytosol"/>
    <property type="evidence" value="ECO:0007669"/>
    <property type="project" value="TreeGrafter"/>
</dbReference>
<dbReference type="GO" id="GO:0003937">
    <property type="term" value="F:IMP cyclohydrolase activity"/>
    <property type="evidence" value="ECO:0007669"/>
    <property type="project" value="UniProtKB-UniRule"/>
</dbReference>
<dbReference type="GO" id="GO:0004643">
    <property type="term" value="F:phosphoribosylaminoimidazolecarboxamide formyltransferase activity"/>
    <property type="evidence" value="ECO:0007669"/>
    <property type="project" value="UniProtKB-UniRule"/>
</dbReference>
<dbReference type="GO" id="GO:0006189">
    <property type="term" value="P:'de novo' IMP biosynthetic process"/>
    <property type="evidence" value="ECO:0007669"/>
    <property type="project" value="UniProtKB-UniRule"/>
</dbReference>
<dbReference type="CDD" id="cd01421">
    <property type="entry name" value="IMPCH"/>
    <property type="match status" value="1"/>
</dbReference>
<dbReference type="FunFam" id="3.40.140.20:FF:000001">
    <property type="entry name" value="Bifunctional purine biosynthesis protein PurH"/>
    <property type="match status" value="1"/>
</dbReference>
<dbReference type="FunFam" id="3.40.140.20:FF:000002">
    <property type="entry name" value="Bifunctional purine biosynthesis protein PurH"/>
    <property type="match status" value="1"/>
</dbReference>
<dbReference type="FunFam" id="3.40.50.1380:FF:000001">
    <property type="entry name" value="Bifunctional purine biosynthesis protein PurH"/>
    <property type="match status" value="1"/>
</dbReference>
<dbReference type="Gene3D" id="3.40.140.20">
    <property type="match status" value="2"/>
</dbReference>
<dbReference type="Gene3D" id="3.40.50.1380">
    <property type="entry name" value="Methylglyoxal synthase-like domain"/>
    <property type="match status" value="1"/>
</dbReference>
<dbReference type="HAMAP" id="MF_00139">
    <property type="entry name" value="PurH"/>
    <property type="match status" value="1"/>
</dbReference>
<dbReference type="InterPro" id="IPR024051">
    <property type="entry name" value="AICAR_Tfase_dup_dom_sf"/>
</dbReference>
<dbReference type="InterPro" id="IPR016193">
    <property type="entry name" value="Cytidine_deaminase-like"/>
</dbReference>
<dbReference type="InterPro" id="IPR011607">
    <property type="entry name" value="MGS-like_dom"/>
</dbReference>
<dbReference type="InterPro" id="IPR036914">
    <property type="entry name" value="MGS-like_dom_sf"/>
</dbReference>
<dbReference type="InterPro" id="IPR002695">
    <property type="entry name" value="PurH-like"/>
</dbReference>
<dbReference type="NCBIfam" id="NF002049">
    <property type="entry name" value="PRK00881.1"/>
    <property type="match status" value="1"/>
</dbReference>
<dbReference type="NCBIfam" id="TIGR00355">
    <property type="entry name" value="purH"/>
    <property type="match status" value="1"/>
</dbReference>
<dbReference type="PANTHER" id="PTHR11692:SF0">
    <property type="entry name" value="BIFUNCTIONAL PURINE BIOSYNTHESIS PROTEIN ATIC"/>
    <property type="match status" value="1"/>
</dbReference>
<dbReference type="PANTHER" id="PTHR11692">
    <property type="entry name" value="BIFUNCTIONAL PURINE BIOSYNTHESIS PROTEIN PURH"/>
    <property type="match status" value="1"/>
</dbReference>
<dbReference type="Pfam" id="PF01808">
    <property type="entry name" value="AICARFT_IMPCHas"/>
    <property type="match status" value="1"/>
</dbReference>
<dbReference type="Pfam" id="PF02142">
    <property type="entry name" value="MGS"/>
    <property type="match status" value="1"/>
</dbReference>
<dbReference type="PIRSF" id="PIRSF000414">
    <property type="entry name" value="AICARFT_IMPCHas"/>
    <property type="match status" value="1"/>
</dbReference>
<dbReference type="SMART" id="SM00798">
    <property type="entry name" value="AICARFT_IMPCHas"/>
    <property type="match status" value="1"/>
</dbReference>
<dbReference type="SMART" id="SM00851">
    <property type="entry name" value="MGS"/>
    <property type="match status" value="1"/>
</dbReference>
<dbReference type="SUPFAM" id="SSF53927">
    <property type="entry name" value="Cytidine deaminase-like"/>
    <property type="match status" value="1"/>
</dbReference>
<dbReference type="SUPFAM" id="SSF52335">
    <property type="entry name" value="Methylglyoxal synthase-like"/>
    <property type="match status" value="1"/>
</dbReference>
<dbReference type="PROSITE" id="PS51855">
    <property type="entry name" value="MGS"/>
    <property type="match status" value="1"/>
</dbReference>
<proteinExistence type="inferred from homology"/>
<name>PUR9_XANOR</name>
<reference key="1">
    <citation type="journal article" date="2005" name="Nucleic Acids Res.">
        <title>The genome sequence of Xanthomonas oryzae pathovar oryzae KACC10331, the bacterial blight pathogen of rice.</title>
        <authorList>
            <person name="Lee B.-M."/>
            <person name="Park Y.-J."/>
            <person name="Park D.-S."/>
            <person name="Kang H.-W."/>
            <person name="Kim J.-G."/>
            <person name="Song E.-S."/>
            <person name="Park I.-C."/>
            <person name="Yoon U.-H."/>
            <person name="Hahn J.-H."/>
            <person name="Koo B.-S."/>
            <person name="Lee G.-B."/>
            <person name="Kim H."/>
            <person name="Park H.-S."/>
            <person name="Yoon K.-O."/>
            <person name="Kim J.-H."/>
            <person name="Jung C.-H."/>
            <person name="Koh N.-H."/>
            <person name="Seo J.-S."/>
            <person name="Go S.-J."/>
        </authorList>
    </citation>
    <scope>NUCLEOTIDE SEQUENCE [LARGE SCALE GENOMIC DNA]</scope>
    <source>
        <strain>KACC10331 / KXO85</strain>
    </source>
</reference>
<organism>
    <name type="scientific">Xanthomonas oryzae pv. oryzae (strain KACC10331 / KXO85)</name>
    <dbReference type="NCBI Taxonomy" id="291331"/>
    <lineage>
        <taxon>Bacteria</taxon>
        <taxon>Pseudomonadati</taxon>
        <taxon>Pseudomonadota</taxon>
        <taxon>Gammaproteobacteria</taxon>
        <taxon>Lysobacterales</taxon>
        <taxon>Lysobacteraceae</taxon>
        <taxon>Xanthomonas</taxon>
    </lineage>
</organism>
<evidence type="ECO:0000255" key="1">
    <source>
        <dbReference type="HAMAP-Rule" id="MF_00139"/>
    </source>
</evidence>
<evidence type="ECO:0000255" key="2">
    <source>
        <dbReference type="PROSITE-ProRule" id="PRU01202"/>
    </source>
</evidence>
<keyword id="KW-0378">Hydrolase</keyword>
<keyword id="KW-0511">Multifunctional enzyme</keyword>
<keyword id="KW-0658">Purine biosynthesis</keyword>
<keyword id="KW-1185">Reference proteome</keyword>
<keyword id="KW-0808">Transferase</keyword>
<comment type="catalytic activity">
    <reaction evidence="1">
        <text>(6R)-10-formyltetrahydrofolate + 5-amino-1-(5-phospho-beta-D-ribosyl)imidazole-4-carboxamide = 5-formamido-1-(5-phospho-D-ribosyl)imidazole-4-carboxamide + (6S)-5,6,7,8-tetrahydrofolate</text>
        <dbReference type="Rhea" id="RHEA:22192"/>
        <dbReference type="ChEBI" id="CHEBI:57453"/>
        <dbReference type="ChEBI" id="CHEBI:58467"/>
        <dbReference type="ChEBI" id="CHEBI:58475"/>
        <dbReference type="ChEBI" id="CHEBI:195366"/>
        <dbReference type="EC" id="2.1.2.3"/>
    </reaction>
</comment>
<comment type="catalytic activity">
    <reaction evidence="1">
        <text>IMP + H2O = 5-formamido-1-(5-phospho-D-ribosyl)imidazole-4-carboxamide</text>
        <dbReference type="Rhea" id="RHEA:18445"/>
        <dbReference type="ChEBI" id="CHEBI:15377"/>
        <dbReference type="ChEBI" id="CHEBI:58053"/>
        <dbReference type="ChEBI" id="CHEBI:58467"/>
        <dbReference type="EC" id="3.5.4.10"/>
    </reaction>
</comment>
<comment type="pathway">
    <text evidence="1">Purine metabolism; IMP biosynthesis via de novo pathway; 5-formamido-1-(5-phospho-D-ribosyl)imidazole-4-carboxamide from 5-amino-1-(5-phospho-D-ribosyl)imidazole-4-carboxamide (10-formyl THF route): step 1/1.</text>
</comment>
<comment type="pathway">
    <text evidence="1">Purine metabolism; IMP biosynthesis via de novo pathway; IMP from 5-formamido-1-(5-phospho-D-ribosyl)imidazole-4-carboxamide: step 1/1.</text>
</comment>
<comment type="domain">
    <text evidence="1">The IMP cyclohydrolase activity resides in the N-terminal region.</text>
</comment>
<comment type="similarity">
    <text evidence="1">Belongs to the PurH family.</text>
</comment>
<feature type="chain" id="PRO_1000018989" description="Bifunctional purine biosynthesis protein PurH">
    <location>
        <begin position="1"/>
        <end position="527"/>
    </location>
</feature>
<feature type="domain" description="MGS-like" evidence="2">
    <location>
        <begin position="1"/>
        <end position="149"/>
    </location>
</feature>
<protein>
    <recommendedName>
        <fullName evidence="1">Bifunctional purine biosynthesis protein PurH</fullName>
    </recommendedName>
    <domain>
        <recommendedName>
            <fullName evidence="1">Phosphoribosylaminoimidazolecarboxamide formyltransferase</fullName>
            <ecNumber evidence="1">2.1.2.3</ecNumber>
        </recommendedName>
        <alternativeName>
            <fullName evidence="1">AICAR transformylase</fullName>
        </alternativeName>
    </domain>
    <domain>
        <recommendedName>
            <fullName evidence="1">IMP cyclohydrolase</fullName>
            <ecNumber evidence="1">3.5.4.10</ecNumber>
        </recommendedName>
        <alternativeName>
            <fullName evidence="1">ATIC</fullName>
        </alternativeName>
        <alternativeName>
            <fullName evidence="1">IMP synthase</fullName>
        </alternativeName>
        <alternativeName>
            <fullName evidence="1">Inosinicase</fullName>
        </alternativeName>
    </domain>
</protein>
<accession>Q5H5H7</accession>
<sequence>MASDFLPVRRALLSVSDKTGLIDLARALVARNVELLSTGGTAKAIREAGLPVKDVAELTGFPEMMDGRVKTLHPLVHGGLLGRAGIDEAVMAEHGIAPIDLLVLNLYPFESVTVKTDCTLADAVENIDIGGPAMLRSAAKNFARVAVATDPAQYADLLAELEANNGQLSAAKRFALSVAAFNRVAQYDAAISNYLSAVADSAETVPTRNPFPAQINSNFVKVMDLRYGENPHQSGAFYRDLYPVPGTLATFQQLQGKELSYNNLADADAAWECVRQFDAPACVIVKHANPCGVAVGAGCGDAYELAYATDPTSAFGGILAFNKTLDAATAKAILDRQFVEVLIAPDYDAGALDYATKKANVRVLKIPHGNGLNNYDTKRIGSGLLMQSADNRGMSLGELSVVTQRAPSEAELGDLLFAWRVAKYVKSNAIVYAKDSRTIGVGAGQMSRVVSAKIAALKAEEAKLTVVGSVMASDAFFPFRDGIDAAASAGIQAVIQPGGSMRDGEVIAAADEHGIAMVFTGVRHFRH</sequence>